<accession>P76485</accession>
<accession>Q2MAM4</accession>
<feature type="chain" id="PRO_0000169182" description="Uncharacterized protein YfbO">
    <location>
        <begin position="1"/>
        <end position="140"/>
    </location>
</feature>
<reference key="1">
    <citation type="journal article" date="1997" name="Science">
        <title>The complete genome sequence of Escherichia coli K-12.</title>
        <authorList>
            <person name="Blattner F.R."/>
            <person name="Plunkett G. III"/>
            <person name="Bloch C.A."/>
            <person name="Perna N.T."/>
            <person name="Burland V."/>
            <person name="Riley M."/>
            <person name="Collado-Vides J."/>
            <person name="Glasner J.D."/>
            <person name="Rode C.K."/>
            <person name="Mayhew G.F."/>
            <person name="Gregor J."/>
            <person name="Davis N.W."/>
            <person name="Kirkpatrick H.A."/>
            <person name="Goeden M.A."/>
            <person name="Rose D.J."/>
            <person name="Mau B."/>
            <person name="Shao Y."/>
        </authorList>
    </citation>
    <scope>NUCLEOTIDE SEQUENCE [LARGE SCALE GENOMIC DNA]</scope>
    <source>
        <strain>K12 / MG1655 / ATCC 47076</strain>
    </source>
</reference>
<reference key="2">
    <citation type="journal article" date="2006" name="Mol. Syst. Biol.">
        <title>Highly accurate genome sequences of Escherichia coli K-12 strains MG1655 and W3110.</title>
        <authorList>
            <person name="Hayashi K."/>
            <person name="Morooka N."/>
            <person name="Yamamoto Y."/>
            <person name="Fujita K."/>
            <person name="Isono K."/>
            <person name="Choi S."/>
            <person name="Ohtsubo E."/>
            <person name="Baba T."/>
            <person name="Wanner B.L."/>
            <person name="Mori H."/>
            <person name="Horiuchi T."/>
        </authorList>
    </citation>
    <scope>NUCLEOTIDE SEQUENCE [LARGE SCALE GENOMIC DNA]</scope>
    <source>
        <strain>K12 / W3110 / ATCC 27325 / DSM 5911</strain>
    </source>
</reference>
<dbReference type="EMBL" id="U00096">
    <property type="protein sequence ID" value="AAC75334.2"/>
    <property type="molecule type" value="Genomic_DNA"/>
</dbReference>
<dbReference type="EMBL" id="AP009048">
    <property type="protein sequence ID" value="BAE76682.1"/>
    <property type="status" value="ALT_INIT"/>
    <property type="molecule type" value="Genomic_DNA"/>
</dbReference>
<dbReference type="PIR" id="H64998">
    <property type="entry name" value="H64998"/>
</dbReference>
<dbReference type="RefSeq" id="NP_416777.2">
    <property type="nucleotide sequence ID" value="NC_000913.3"/>
</dbReference>
<dbReference type="RefSeq" id="WP_000188051.1">
    <property type="nucleotide sequence ID" value="NZ_LN832404.1"/>
</dbReference>
<dbReference type="BioGRID" id="4261775">
    <property type="interactions" value="6"/>
</dbReference>
<dbReference type="FunCoup" id="P76485">
    <property type="interactions" value="2"/>
</dbReference>
<dbReference type="STRING" id="511145.b2274"/>
<dbReference type="PaxDb" id="511145-b2274"/>
<dbReference type="EnsemblBacteria" id="AAC75334">
    <property type="protein sequence ID" value="AAC75334"/>
    <property type="gene ID" value="b2274"/>
</dbReference>
<dbReference type="GeneID" id="946752"/>
<dbReference type="KEGG" id="ecj:JW2269"/>
<dbReference type="KEGG" id="eco:b2274"/>
<dbReference type="KEGG" id="ecoc:C3026_12695"/>
<dbReference type="PATRIC" id="fig|511145.12.peg.2367"/>
<dbReference type="EchoBASE" id="EB3852"/>
<dbReference type="eggNOG" id="ENOG5033IX7">
    <property type="taxonomic scope" value="Bacteria"/>
</dbReference>
<dbReference type="HOGENOM" id="CLU_145878_0_0_6"/>
<dbReference type="InParanoid" id="P76485"/>
<dbReference type="OrthoDB" id="9805408at2"/>
<dbReference type="BioCyc" id="EcoCyc:G7181-MONOMER"/>
<dbReference type="PRO" id="PR:P76485"/>
<dbReference type="Proteomes" id="UP000000625">
    <property type="component" value="Chromosome"/>
</dbReference>
<proteinExistence type="predicted"/>
<name>YFBO_ECOLI</name>
<protein>
    <recommendedName>
        <fullName>Uncharacterized protein YfbO</fullName>
    </recommendedName>
</protein>
<evidence type="ECO:0000305" key="1"/>
<gene>
    <name type="primary">yfbO</name>
    <name type="ordered locus">b2274</name>
    <name type="ordered locus">JW2269</name>
</gene>
<organism>
    <name type="scientific">Escherichia coli (strain K12)</name>
    <dbReference type="NCBI Taxonomy" id="83333"/>
    <lineage>
        <taxon>Bacteria</taxon>
        <taxon>Pseudomonadati</taxon>
        <taxon>Pseudomonadota</taxon>
        <taxon>Gammaproteobacteria</taxon>
        <taxon>Enterobacterales</taxon>
        <taxon>Enterobacteriaceae</taxon>
        <taxon>Escherichia</taxon>
    </lineage>
</organism>
<keyword id="KW-1185">Reference proteome</keyword>
<comment type="sequence caution" evidence="1">
    <conflict type="erroneous initiation">
        <sequence resource="EMBL-CDS" id="BAE76682"/>
    </conflict>
</comment>
<sequence length="140" mass="16163">MTPLERITQLVNINGDVNNPDTPRPLLSLEDFFIDNNIHGSICCNVIPEQSPQAIYHHFLKIRERNNVSDVLVEITMFDDPDWPFSESILVITTASPEEVQSWFVEEIAPDECWEGWSEDTEHGWVEVPVGMHPVTCWWD</sequence>